<reference key="1">
    <citation type="journal article" date="2001" name="Proc. Natl. Acad. Sci. U.S.A.">
        <title>Mammalian inositol polyphosphate multikinase synthesizes inositol 1,4,5-trisphosphate and an inositol pyrophosphate.</title>
        <authorList>
            <person name="Saiardi A."/>
            <person name="Nagata E."/>
            <person name="Luo H.R."/>
            <person name="Sawa A."/>
            <person name="Luo X."/>
            <person name="Snowman A.M."/>
            <person name="Snyder S.H."/>
        </authorList>
    </citation>
    <scope>NUCLEOTIDE SEQUENCE [MRNA]</scope>
    <scope>FUNCTION</scope>
    <scope>COFACTOR</scope>
    <scope>PATHWAY</scope>
    <scope>TISSUE SPECIFICITY</scope>
    <scope>CATALYTIC ACTIVITY</scope>
</reference>
<reference key="2">
    <citation type="journal article" date="2005" name="Proc. Natl. Acad. Sci. U.S.A.">
        <title>Inositol polyphosphate multikinase is a nuclear PI3-kinase with transcriptional regulatory activity.</title>
        <authorList>
            <person name="Resnick A.C."/>
            <person name="Snowman A.M."/>
            <person name="Kang B.N."/>
            <person name="Hurt K.J."/>
            <person name="Snyder S.H."/>
            <person name="Saiardi A."/>
        </authorList>
    </citation>
    <scope>CATALYTIC ACTIVITY</scope>
    <scope>SUBCELLULAR LOCATION</scope>
    <scope>FUNCTION</scope>
    <scope>BIOPHYSICOCHEMICAL PROPERTIES</scope>
</reference>
<reference key="3">
    <citation type="journal article" date="2005" name="J. Biol. Chem.">
        <title>A role for rat inositol polyphosphate kinases, rIpk2 and rIpk1, in inositol pentakisphosphate and inositol hexakisphosphate production in Rat-1 cells.</title>
        <authorList>
            <person name="Fujii M."/>
            <person name="York J.D."/>
        </authorList>
    </citation>
    <scope>FUNCTION</scope>
    <scope>CATALYTIC ACTIVITY</scope>
    <scope>SUBCELLULAR LOCATION</scope>
    <scope>MUTAGENESIS OF ASP-127</scope>
</reference>
<keyword id="KW-0007">Acetylation</keyword>
<keyword id="KW-0067">ATP-binding</keyword>
<keyword id="KW-0418">Kinase</keyword>
<keyword id="KW-0443">Lipid metabolism</keyword>
<keyword id="KW-0460">Magnesium</keyword>
<keyword id="KW-0479">Metal-binding</keyword>
<keyword id="KW-0547">Nucleotide-binding</keyword>
<keyword id="KW-0539">Nucleus</keyword>
<keyword id="KW-1208">Phospholipid metabolism</keyword>
<keyword id="KW-0597">Phosphoprotein</keyword>
<keyword id="KW-1185">Reference proteome</keyword>
<keyword id="KW-0808">Transferase</keyword>
<proteinExistence type="evidence at protein level"/>
<name>IPMK_RAT</name>
<evidence type="ECO:0000250" key="1">
    <source>
        <dbReference type="UniProtKB" id="Q7TT16"/>
    </source>
</evidence>
<evidence type="ECO:0000250" key="2">
    <source>
        <dbReference type="UniProtKB" id="Q8NFU5"/>
    </source>
</evidence>
<evidence type="ECO:0000256" key="3">
    <source>
        <dbReference type="SAM" id="MobiDB-lite"/>
    </source>
</evidence>
<evidence type="ECO:0000269" key="4">
    <source>
    </source>
</evidence>
<evidence type="ECO:0000269" key="5">
    <source>
    </source>
</evidence>
<evidence type="ECO:0000269" key="6">
    <source>
    </source>
</evidence>
<evidence type="ECO:0000303" key="7">
    <source>
    </source>
</evidence>
<evidence type="ECO:0000303" key="8">
    <source>
    </source>
</evidence>
<evidence type="ECO:0000305" key="9"/>
<evidence type="ECO:0000305" key="10">
    <source>
    </source>
</evidence>
<evidence type="ECO:0000305" key="11">
    <source>
    </source>
</evidence>
<dbReference type="EC" id="2.7.1.140" evidence="5"/>
<dbReference type="EC" id="2.7.1.151" evidence="4 5"/>
<dbReference type="EC" id="2.7.1.153" evidence="6"/>
<dbReference type="EMBL" id="AY014898">
    <property type="protein sequence ID" value="AAG42923.1"/>
    <property type="molecule type" value="mRNA"/>
</dbReference>
<dbReference type="RefSeq" id="NP_599244.1">
    <property type="nucleotide sequence ID" value="NM_134417.2"/>
</dbReference>
<dbReference type="SMR" id="Q99NI4"/>
<dbReference type="FunCoup" id="Q99NI4">
    <property type="interactions" value="923"/>
</dbReference>
<dbReference type="STRING" id="10116.ENSRNOP00000000748"/>
<dbReference type="SwissLipids" id="SLP:000000959"/>
<dbReference type="iPTMnet" id="Q99NI4"/>
<dbReference type="PhosphoSitePlus" id="Q99NI4"/>
<dbReference type="PaxDb" id="10116-ENSRNOP00000000748"/>
<dbReference type="GeneID" id="171458"/>
<dbReference type="KEGG" id="rno:171458"/>
<dbReference type="UCSC" id="RGD:620954">
    <property type="organism name" value="rat"/>
</dbReference>
<dbReference type="AGR" id="RGD:620954"/>
<dbReference type="CTD" id="253430"/>
<dbReference type="RGD" id="620954">
    <property type="gene designation" value="Ipmk"/>
</dbReference>
<dbReference type="VEuPathDB" id="HostDB:ENSRNOG00000000609"/>
<dbReference type="eggNOG" id="KOG1620">
    <property type="taxonomic scope" value="Eukaryota"/>
</dbReference>
<dbReference type="HOGENOM" id="CLU_042569_0_0_1"/>
<dbReference type="InParanoid" id="Q99NI4"/>
<dbReference type="OrthoDB" id="338650at2759"/>
<dbReference type="PhylomeDB" id="Q99NI4"/>
<dbReference type="TreeFam" id="TF321442"/>
<dbReference type="BRENDA" id="2.7.1.151">
    <property type="organism ID" value="5301"/>
</dbReference>
<dbReference type="Reactome" id="R-RNO-1855191">
    <property type="pathway name" value="Synthesis of IPs in the nucleus"/>
</dbReference>
<dbReference type="SABIO-RK" id="Q99NI4"/>
<dbReference type="UniPathway" id="UPA00949"/>
<dbReference type="PRO" id="PR:Q99NI4"/>
<dbReference type="Proteomes" id="UP000002494">
    <property type="component" value="Chromosome 20"/>
</dbReference>
<dbReference type="Bgee" id="ENSRNOG00000000609">
    <property type="expression patterns" value="Expressed in kidney and 20 other cell types or tissues"/>
</dbReference>
<dbReference type="GO" id="GO:0005737">
    <property type="term" value="C:cytoplasm"/>
    <property type="evidence" value="ECO:0000318"/>
    <property type="project" value="GO_Central"/>
</dbReference>
<dbReference type="GO" id="GO:0005634">
    <property type="term" value="C:nucleus"/>
    <property type="evidence" value="ECO:0000314"/>
    <property type="project" value="UniProtKB"/>
</dbReference>
<dbReference type="GO" id="GO:0046934">
    <property type="term" value="F:1-phosphatidylinositol-4,5-bisphosphate 3-kinase activity"/>
    <property type="evidence" value="ECO:0000314"/>
    <property type="project" value="UniProtKB"/>
</dbReference>
<dbReference type="GO" id="GO:0005524">
    <property type="term" value="F:ATP binding"/>
    <property type="evidence" value="ECO:0007669"/>
    <property type="project" value="UniProtKB-KW"/>
</dbReference>
<dbReference type="GO" id="GO:0097243">
    <property type="term" value="F:flavonoid binding"/>
    <property type="evidence" value="ECO:0000266"/>
    <property type="project" value="RGD"/>
</dbReference>
<dbReference type="GO" id="GO:0051765">
    <property type="term" value="F:inositol tetrakisphosphate kinase activity"/>
    <property type="evidence" value="ECO:0000318"/>
    <property type="project" value="GO_Central"/>
</dbReference>
<dbReference type="GO" id="GO:0000825">
    <property type="term" value="F:inositol-1,3,4,5-tetrakisphosphate 6-kinase activity"/>
    <property type="evidence" value="ECO:0000314"/>
    <property type="project" value="UniProtKB"/>
</dbReference>
<dbReference type="GO" id="GO:0047326">
    <property type="term" value="F:inositol-1,3,4,6-tetrakisphosphate 5-kinase activity"/>
    <property type="evidence" value="ECO:0000314"/>
    <property type="project" value="UniProtKB"/>
</dbReference>
<dbReference type="GO" id="GO:0000824">
    <property type="term" value="F:inositol-1,4,5,6-tetrakisphosphate 3-kinase activity"/>
    <property type="evidence" value="ECO:0000314"/>
    <property type="project" value="UniProtKB"/>
</dbReference>
<dbReference type="GO" id="GO:0008440">
    <property type="term" value="F:inositol-1,4,5-trisphosphate 3-kinase activity"/>
    <property type="evidence" value="ECO:0000266"/>
    <property type="project" value="RGD"/>
</dbReference>
<dbReference type="GO" id="GO:0000823">
    <property type="term" value="F:inositol-1,4,5-trisphosphate 6-kinase activity"/>
    <property type="evidence" value="ECO:0000314"/>
    <property type="project" value="UniProtKB"/>
</dbReference>
<dbReference type="GO" id="GO:0046872">
    <property type="term" value="F:metal ion binding"/>
    <property type="evidence" value="ECO:0007669"/>
    <property type="project" value="UniProtKB-KW"/>
</dbReference>
<dbReference type="GO" id="GO:0032958">
    <property type="term" value="P:inositol phosphate biosynthetic process"/>
    <property type="evidence" value="ECO:0000266"/>
    <property type="project" value="RGD"/>
</dbReference>
<dbReference type="GO" id="GO:0032957">
    <property type="term" value="P:inositol trisphosphate metabolic process"/>
    <property type="evidence" value="ECO:0000266"/>
    <property type="project" value="RGD"/>
</dbReference>
<dbReference type="GO" id="GO:0070266">
    <property type="term" value="P:necroptotic process"/>
    <property type="evidence" value="ECO:0000250"/>
    <property type="project" value="UniProtKB"/>
</dbReference>
<dbReference type="GO" id="GO:0001841">
    <property type="term" value="P:neural tube formation"/>
    <property type="evidence" value="ECO:0000266"/>
    <property type="project" value="RGD"/>
</dbReference>
<dbReference type="GO" id="GO:0046488">
    <property type="term" value="P:phosphatidylinositol metabolic process"/>
    <property type="evidence" value="ECO:0007669"/>
    <property type="project" value="UniProtKB-UniPathway"/>
</dbReference>
<dbReference type="Gene3D" id="3.30.470.160">
    <property type="entry name" value="Inositol polyphosphate kinase"/>
    <property type="match status" value="1"/>
</dbReference>
<dbReference type="InterPro" id="IPR005522">
    <property type="entry name" value="IPK"/>
</dbReference>
<dbReference type="InterPro" id="IPR038286">
    <property type="entry name" value="IPK_sf"/>
</dbReference>
<dbReference type="PANTHER" id="PTHR12400">
    <property type="entry name" value="INOSITOL POLYPHOSPHATE KINASE"/>
    <property type="match status" value="1"/>
</dbReference>
<dbReference type="PANTHER" id="PTHR12400:SF51">
    <property type="entry name" value="INOSITOL POLYPHOSPHATE MULTIKINASE"/>
    <property type="match status" value="1"/>
</dbReference>
<dbReference type="Pfam" id="PF03770">
    <property type="entry name" value="IPK"/>
    <property type="match status" value="1"/>
</dbReference>
<dbReference type="SUPFAM" id="SSF56104">
    <property type="entry name" value="SAICAR synthase-like"/>
    <property type="match status" value="1"/>
</dbReference>
<feature type="initiator methionine" description="Removed" evidence="2">
    <location>
        <position position="1"/>
    </location>
</feature>
<feature type="chain" id="PRO_0000066872" description="Inositol polyphosphate multikinase">
    <location>
        <begin position="2"/>
        <end position="396"/>
    </location>
</feature>
<feature type="region of interest" description="Disordered" evidence="3">
    <location>
        <begin position="1"/>
        <end position="22"/>
    </location>
</feature>
<feature type="short sequence motif" description="Nuclear localization signal" evidence="2">
    <location>
        <begin position="300"/>
        <end position="310"/>
    </location>
</feature>
<feature type="compositionally biased region" description="Low complexity" evidence="3">
    <location>
        <begin position="1"/>
        <end position="13"/>
    </location>
</feature>
<feature type="binding site" evidence="2">
    <location>
        <position position="58"/>
    </location>
    <ligand>
        <name>ATP</name>
        <dbReference type="ChEBI" id="CHEBI:30616"/>
    </ligand>
</feature>
<feature type="binding site" evidence="2">
    <location>
        <position position="65"/>
    </location>
    <ligand>
        <name>substrate</name>
    </ligand>
</feature>
<feature type="binding site" evidence="2">
    <location>
        <begin position="114"/>
        <end position="116"/>
    </location>
    <ligand>
        <name>ATP</name>
        <dbReference type="ChEBI" id="CHEBI:30616"/>
    </ligand>
</feature>
<feature type="binding site" evidence="2">
    <location>
        <position position="127"/>
    </location>
    <ligand>
        <name>ATP</name>
        <dbReference type="ChEBI" id="CHEBI:30616"/>
    </ligand>
</feature>
<feature type="binding site" evidence="2">
    <location>
        <position position="129"/>
    </location>
    <ligand>
        <name>substrate</name>
    </ligand>
</feature>
<feature type="binding site" evidence="2">
    <location>
        <begin position="143"/>
        <end position="150"/>
    </location>
    <ligand>
        <name>substrate</name>
    </ligand>
</feature>
<feature type="binding site" evidence="2">
    <location>
        <position position="179"/>
    </location>
    <ligand>
        <name>substrate</name>
    </ligand>
</feature>
<feature type="binding site" evidence="2">
    <location>
        <position position="365"/>
    </location>
    <ligand>
        <name>ATP</name>
        <dbReference type="ChEBI" id="CHEBI:30616"/>
    </ligand>
</feature>
<feature type="modified residue" description="N-acetylalanine" evidence="2">
    <location>
        <position position="2"/>
    </location>
</feature>
<feature type="modified residue" description="Phosphoserine" evidence="1">
    <location>
        <position position="19"/>
    </location>
</feature>
<feature type="mutagenesis site" description="Shows weak but significant activity toward the substrate 1D-myo-inositol 1,4,5-trisphosphate." evidence="5">
    <original>D</original>
    <variation>A</variation>
    <location>
        <position position="127"/>
    </location>
</feature>
<organism>
    <name type="scientific">Rattus norvegicus</name>
    <name type="common">Rat</name>
    <dbReference type="NCBI Taxonomy" id="10116"/>
    <lineage>
        <taxon>Eukaryota</taxon>
        <taxon>Metazoa</taxon>
        <taxon>Chordata</taxon>
        <taxon>Craniata</taxon>
        <taxon>Vertebrata</taxon>
        <taxon>Euteleostomi</taxon>
        <taxon>Mammalia</taxon>
        <taxon>Eutheria</taxon>
        <taxon>Euarchontoglires</taxon>
        <taxon>Glires</taxon>
        <taxon>Rodentia</taxon>
        <taxon>Myomorpha</taxon>
        <taxon>Muroidea</taxon>
        <taxon>Muridae</taxon>
        <taxon>Murinae</taxon>
        <taxon>Rattus</taxon>
    </lineage>
</organism>
<comment type="function">
    <text evidence="1 2 4 5 6">Inositol phosphate kinase with a broad substrate specificity. Phosphorylates inositol 1,4,5-trisphosphate (Ins(1,4,5)P3) first to inositol 1,3,4,5-tetrakisphosphate and then to inositol 1,3,4,5,6-pentakisphosphate (Ins(1,3,4,5,6)P5) (PubMed:11226235, PubMed:15528195). Phosphorylates inositol 1,3,4,6-tetrakisphosphate (Ins(1,3,4,6)P4) (PubMed:15528195). Phosphorylates inositol 1,4,5,6-tetrakisphosphate (Ins(1,4,5,6)P4) (PubMed:15528195). Phosphorylates glycero-3-phospho-1D-myo-inositol 4,5-bisphosphate to glycero-3-phospho-1D-myo-inositol 3,4,5-trisphosphate (PubMed:16123124). Plays an important role in MLKL-mediated necroptosis via its role in the biosynthesis of inositol pentakisphosphate (InsP5) and inositol hexakisphosphate (InsP6). Binding of these highly phosphorylated inositol phosphates to MLKL mediates the release of an N-terminal auto-inhibitory region, leading to activation of the kinase. Essential for activated phospho-MLKL to oligomerize and localize to the cell membrane during necroptosis (By similarity). Required for normal embryonic development, probably via its role in the biosynthesis of inositol 1,3,4,5,6-pentakisphosphate (Ins(1,3,4,5,6)P5) and inositol hexakisphosphate (InsP6) (By similarity).</text>
</comment>
<comment type="catalytic activity">
    <reaction evidence="4 5">
        <text>1D-myo-inositol 1,4,5-trisphosphate + 2 ATP = 1D-myo-inositol 1,3,4,5,6-pentakisphosphate + 2 ADP + 2 H(+)</text>
        <dbReference type="Rhea" id="RHEA:32359"/>
        <dbReference type="ChEBI" id="CHEBI:15378"/>
        <dbReference type="ChEBI" id="CHEBI:30616"/>
        <dbReference type="ChEBI" id="CHEBI:57733"/>
        <dbReference type="ChEBI" id="CHEBI:203600"/>
        <dbReference type="ChEBI" id="CHEBI:456216"/>
        <dbReference type="EC" id="2.7.1.151"/>
    </reaction>
</comment>
<comment type="catalytic activity">
    <reaction evidence="5">
        <text>1D-myo-inositol 1,3,4,6-tetrakisphosphate + ATP = 1D-myo-inositol 1,3,4,5,6-pentakisphosphate + ADP + H(+)</text>
        <dbReference type="Rhea" id="RHEA:12717"/>
        <dbReference type="ChEBI" id="CHEBI:15378"/>
        <dbReference type="ChEBI" id="CHEBI:30616"/>
        <dbReference type="ChEBI" id="CHEBI:57660"/>
        <dbReference type="ChEBI" id="CHEBI:57733"/>
        <dbReference type="ChEBI" id="CHEBI:456216"/>
        <dbReference type="EC" id="2.7.1.140"/>
    </reaction>
</comment>
<comment type="catalytic activity">
    <reaction evidence="2">
        <text>1-octadecanoyl-2-(5Z,8Z,11Z,14Z)-eicosatetraenoyl-sn-glycero-3-phospho-1D-myo-inositol 4,5-bisphosphate + ATP = 1-octadecanoyl-2-(5Z,8Z,11Z,14Z-eicosatetraenoyl)-sn-glycero-3-phospho-(1D-myo-inositol 3,4,5-triphosphate) + ADP + H(+)</text>
        <dbReference type="Rhea" id="RHEA:43396"/>
        <dbReference type="ChEBI" id="CHEBI:15378"/>
        <dbReference type="ChEBI" id="CHEBI:30616"/>
        <dbReference type="ChEBI" id="CHEBI:77137"/>
        <dbReference type="ChEBI" id="CHEBI:83243"/>
        <dbReference type="ChEBI" id="CHEBI:456216"/>
    </reaction>
</comment>
<comment type="catalytic activity">
    <reaction evidence="6">
        <text>a 1,2-diacyl-sn-glycero-3-phospho-(1D-myo-inositol-4,5-bisphosphate) + ATP = a 1,2-diacyl-sn-glycero-3-phospho-(1D-myo-inositol-3,4,5-trisphosphate) + ADP + H(+)</text>
        <dbReference type="Rhea" id="RHEA:21292"/>
        <dbReference type="ChEBI" id="CHEBI:15378"/>
        <dbReference type="ChEBI" id="CHEBI:30616"/>
        <dbReference type="ChEBI" id="CHEBI:57836"/>
        <dbReference type="ChEBI" id="CHEBI:58456"/>
        <dbReference type="ChEBI" id="CHEBI:456216"/>
        <dbReference type="EC" id="2.7.1.153"/>
    </reaction>
    <physiologicalReaction direction="left-to-right" evidence="11">
        <dbReference type="Rhea" id="RHEA:21293"/>
    </physiologicalReaction>
</comment>
<comment type="catalytic activity">
    <reaction evidence="5">
        <text>1D-myo-inositol 1,4,5,6-tetrakisphosphate + ATP = 1D-myo-inositol 1,3,4,5,6-pentakisphosphate + ADP + H(+)</text>
        <dbReference type="Rhea" id="RHEA:11856"/>
        <dbReference type="ChEBI" id="CHEBI:15378"/>
        <dbReference type="ChEBI" id="CHEBI:30616"/>
        <dbReference type="ChEBI" id="CHEBI:57627"/>
        <dbReference type="ChEBI" id="CHEBI:57733"/>
        <dbReference type="ChEBI" id="CHEBI:456216"/>
    </reaction>
</comment>
<comment type="cofactor">
    <cofactor evidence="10">
        <name>Mg(2+)</name>
        <dbReference type="ChEBI" id="CHEBI:18420"/>
    </cofactor>
    <text evidence="2">Binds two Mg(2+), but the interaction with the protein is mostly indirect.</text>
</comment>
<comment type="biophysicochemical properties">
    <kinetics>
        <KM evidence="6">6 uM for 1,2-diacyl-sn-glycero-3-phospho-(1D-myo-inositol-4,5-bisphosphate)</KM>
        <Vmax evidence="6">0.7 umol/min/mg enzyme for 1,2-diacyl-sn-glycero-3-phospho-(1D-myo-inositol-4,5-bisphosphate)</Vmax>
    </kinetics>
</comment>
<comment type="pathway">
    <text evidence="4">Phospholipid metabolism; phosphatidylinositol metabolism.</text>
</comment>
<comment type="subcellular location">
    <subcellularLocation>
        <location evidence="5 6">Nucleus</location>
    </subcellularLocation>
</comment>
<comment type="tissue specificity">
    <text evidence="4">Highly expressed in kidney, and at lower levels in hippocampus, brain cortex, cerebellum, heart and lung.</text>
</comment>
<comment type="similarity">
    <text evidence="9">Belongs to the inositol phosphokinase (IPK) family.</text>
</comment>
<protein>
    <recommendedName>
        <fullName evidence="7">Inositol polyphosphate multikinase</fullName>
        <ecNumber evidence="5">2.7.1.140</ecNumber>
        <ecNumber evidence="4 5">2.7.1.151</ecNumber>
        <ecNumber evidence="6">2.7.1.153</ecNumber>
    </recommendedName>
    <alternativeName>
        <fullName>Inositol 1,3,4,6-tetrakisphosphate 5-kinase</fullName>
    </alternativeName>
</protein>
<sequence>MAAEPPALRLRPPGSTGDSPPVPRLLGGCVPLSHQVAGHMYGKDKVGILQHPDGTVLKQLQPPPRGPRELEFYTMVYAADCADAVLLELRKHLPKYYGVWSPPSAPNDVYLKLEDVTHKFNKPCIMDVKIGRKSYDPFASAEKIQQQVSKYPLMEEIGFLVLGMRVYHLHSDSYETQNQHYGRGLTKETLKEGVSKFFHNGFCLRKDAVAASIQKVEKILQWFENQKQLNFYASSLLFVYEGSSQPATTKSNDRTLAGRFLSKGALSDADVLECNNNFHLFSSPANGTSVGKSLSKAYSRHRKLYAKKHQSQTSLKVETLEQDNGWKSMSQEHLNGNVLSQLEKVFYHLPAGRQEIAEAEVRMIDFAHVFPSNTVDEGYVYGLKHLIAVLRSILDS</sequence>
<gene>
    <name type="primary">Ipmk</name>
    <name type="synonym">Impk</name>
    <name evidence="8" type="synonym">Ipk2</name>
</gene>
<accession>Q99NI4</accession>